<evidence type="ECO:0000250" key="1">
    <source>
        <dbReference type="UniProtKB" id="C0HLM6"/>
    </source>
</evidence>
<evidence type="ECO:0000250" key="2">
    <source>
        <dbReference type="UniProtKB" id="Q8N5G0"/>
    </source>
</evidence>
<evidence type="ECO:0000255" key="3"/>
<evidence type="ECO:0000269" key="4">
    <source>
    </source>
</evidence>
<evidence type="ECO:0000269" key="5">
    <source>
    </source>
</evidence>
<evidence type="ECO:0000269" key="6">
    <source>
    </source>
</evidence>
<evidence type="ECO:0000269" key="7">
    <source>
    </source>
</evidence>
<evidence type="ECO:0000269" key="8">
    <source>
    </source>
</evidence>
<evidence type="ECO:0000269" key="9">
    <source>
    </source>
</evidence>
<evidence type="ECO:0000269" key="10">
    <source>
    </source>
</evidence>
<evidence type="ECO:0000269" key="11">
    <source>
    </source>
</evidence>
<evidence type="ECO:0000269" key="12">
    <source>
    </source>
</evidence>
<evidence type="ECO:0000305" key="13"/>
<evidence type="ECO:0000312" key="14">
    <source>
        <dbReference type="MGI" id="MGI:1913528"/>
    </source>
</evidence>
<evidence type="ECO:0000312" key="15">
    <source>
        <dbReference type="Proteomes" id="UP000000589"/>
    </source>
</evidence>
<evidence type="ECO:0007744" key="16">
    <source>
    </source>
</evidence>
<dbReference type="EMBL" id="AC122522">
    <property type="status" value="NOT_ANNOTATED_CDS"/>
    <property type="molecule type" value="Genomic_DNA"/>
</dbReference>
<dbReference type="EMBL" id="AC134463">
    <property type="status" value="NOT_ANNOTATED_CDS"/>
    <property type="molecule type" value="Genomic_DNA"/>
</dbReference>
<dbReference type="CCDS" id="CCDS51502.1"/>
<dbReference type="RefSeq" id="NP_001138905.1">
    <property type="nucleotide sequence ID" value="NM_001145433.1"/>
</dbReference>
<dbReference type="SMR" id="D3Z7Q2"/>
<dbReference type="FunCoup" id="D3Z7Q2">
    <property type="interactions" value="321"/>
</dbReference>
<dbReference type="STRING" id="10090.ENSMUSP00000121637"/>
<dbReference type="iPTMnet" id="D3Z7Q2"/>
<dbReference type="PhosphoSitePlus" id="D3Z7Q2"/>
<dbReference type="PaxDb" id="10090-ENSMUSP00000113019"/>
<dbReference type="PeptideAtlas" id="D3Z7Q2"/>
<dbReference type="ProteomicsDB" id="369442"/>
<dbReference type="Pumba" id="D3Z7Q2"/>
<dbReference type="Antibodypedia" id="52038">
    <property type="antibodies" value="6 antibodies from 5 providers"/>
</dbReference>
<dbReference type="Ensembl" id="ENSMUST00000147148.5">
    <property type="protein sequence ID" value="ENSMUSP00000121637.3"/>
    <property type="gene ID" value="ENSMUSG00000061461.12"/>
</dbReference>
<dbReference type="GeneID" id="66278"/>
<dbReference type="KEGG" id="mmu:66278"/>
<dbReference type="UCSC" id="uc008xlg.2">
    <property type="organism name" value="mouse"/>
</dbReference>
<dbReference type="AGR" id="MGI:1913528"/>
<dbReference type="CTD" id="389203"/>
<dbReference type="MGI" id="MGI:1913528">
    <property type="gene designation" value="Smim20"/>
</dbReference>
<dbReference type="VEuPathDB" id="HostDB:ENSMUSG00000061461"/>
<dbReference type="eggNOG" id="ENOG502S83Z">
    <property type="taxonomic scope" value="Eukaryota"/>
</dbReference>
<dbReference type="GeneTree" id="ENSGT00390000002398"/>
<dbReference type="HOGENOM" id="CLU_175940_1_0_1"/>
<dbReference type="InParanoid" id="D3Z7Q2"/>
<dbReference type="OMA" id="YPIFVYP"/>
<dbReference type="OrthoDB" id="6729at9989"/>
<dbReference type="PhylomeDB" id="D3Z7Q2"/>
<dbReference type="TreeFam" id="TF353700"/>
<dbReference type="Reactome" id="R-MMU-9864848">
    <property type="pathway name" value="Complex IV assembly"/>
</dbReference>
<dbReference type="BioGRID-ORCS" id="66278">
    <property type="hits" value="2 hits in 76 CRISPR screens"/>
</dbReference>
<dbReference type="ChiTaRS" id="Smim20">
    <property type="organism name" value="mouse"/>
</dbReference>
<dbReference type="PRO" id="PR:D3Z7Q2"/>
<dbReference type="Proteomes" id="UP000000589">
    <property type="component" value="Chromosome 5"/>
</dbReference>
<dbReference type="RNAct" id="D3Z7Q2">
    <property type="molecule type" value="protein"/>
</dbReference>
<dbReference type="Bgee" id="ENSMUSG00000061461">
    <property type="expression patterns" value="Expressed in right kidney and 232 other cell types or tissues"/>
</dbReference>
<dbReference type="ExpressionAtlas" id="D3Z7Q2">
    <property type="expression patterns" value="baseline and differential"/>
</dbReference>
<dbReference type="GO" id="GO:0005576">
    <property type="term" value="C:extracellular region"/>
    <property type="evidence" value="ECO:0007669"/>
    <property type="project" value="UniProtKB-SubCell"/>
</dbReference>
<dbReference type="GO" id="GO:0005743">
    <property type="term" value="C:mitochondrial inner membrane"/>
    <property type="evidence" value="ECO:0007669"/>
    <property type="project" value="UniProtKB-SubCell"/>
</dbReference>
<dbReference type="GO" id="GO:0033617">
    <property type="term" value="P:mitochondrial cytochrome c oxidase assembly"/>
    <property type="evidence" value="ECO:0007669"/>
    <property type="project" value="Ensembl"/>
</dbReference>
<dbReference type="InterPro" id="IPR027917">
    <property type="entry name" value="SMIM20"/>
</dbReference>
<dbReference type="PANTHER" id="PTHR34923">
    <property type="entry name" value="SMALL INTEGRAL MEMBRANE PROTEIN 20"/>
    <property type="match status" value="1"/>
</dbReference>
<dbReference type="PANTHER" id="PTHR34923:SF1">
    <property type="entry name" value="SMALL INTEGRAL MEMBRANE PROTEIN 20"/>
    <property type="match status" value="1"/>
</dbReference>
<dbReference type="Pfam" id="PF15061">
    <property type="entry name" value="DUF4538"/>
    <property type="match status" value="1"/>
</dbReference>
<gene>
    <name evidence="14" type="primary">Smim20</name>
</gene>
<name>SIM20_MOUSE</name>
<accession>D3Z7Q2</accession>
<feature type="chain" id="PRO_0000449030" description="Small integral membrane protein 20">
    <location>
        <begin position="1"/>
        <end position="69"/>
    </location>
</feature>
<feature type="peptide" id="PRO_0000449031" description="Phoenixin-20">
    <location>
        <begin position="47"/>
        <end position="66"/>
    </location>
</feature>
<feature type="peptide" id="PRO_0000449032" description="Phoenixin-14">
    <location>
        <begin position="53"/>
        <end position="66"/>
    </location>
</feature>
<feature type="topological domain" description="Mitochondrial matrix" evidence="13">
    <location>
        <begin position="1"/>
        <end position="8"/>
    </location>
</feature>
<feature type="transmembrane region" description="Helical" evidence="3">
    <location>
        <begin position="9"/>
        <end position="29"/>
    </location>
</feature>
<feature type="topological domain" description="Mitochondrial intermembrane" evidence="13">
    <location>
        <begin position="30"/>
        <end position="69"/>
    </location>
</feature>
<feature type="modified residue" description="Phenylalanine amide" evidence="1">
    <location>
        <position position="66"/>
    </location>
</feature>
<organism evidence="15">
    <name type="scientific">Mus musculus</name>
    <name type="common">Mouse</name>
    <dbReference type="NCBI Taxonomy" id="10090"/>
    <lineage>
        <taxon>Eukaryota</taxon>
        <taxon>Metazoa</taxon>
        <taxon>Chordata</taxon>
        <taxon>Craniata</taxon>
        <taxon>Vertebrata</taxon>
        <taxon>Euteleostomi</taxon>
        <taxon>Mammalia</taxon>
        <taxon>Eutheria</taxon>
        <taxon>Euarchontoglires</taxon>
        <taxon>Glires</taxon>
        <taxon>Rodentia</taxon>
        <taxon>Myomorpha</taxon>
        <taxon>Muroidea</taxon>
        <taxon>Muridae</taxon>
        <taxon>Murinae</taxon>
        <taxon>Mus</taxon>
        <taxon>Mus</taxon>
    </lineage>
</organism>
<proteinExistence type="evidence at protein level"/>
<comment type="function">
    <molecule>Small integral membrane protein 20</molecule>
    <text evidence="2">Component of the MITRAC (mitochondrial translation regulation assembly intermediate of cytochrome c oxidase complex) complex, that regulates cytochrome c oxidase assembly (By similarity). Promotes the progression of complex assembly after the association of MT-CO1/COX1 with COX4I1 and COX6C (By similarity). Chaperone-like assembly factor required to stabilize newly synthesized MT-CO1/COX1 and to prevent its premature turnover (By similarity).</text>
</comment>
<comment type="function">
    <molecule>Phoenixin-14</molecule>
    <text evidence="1 5 6 7 8 9 11 12">Peptide involved in a broad spectrum of regulatory functions (PubMed:25687846, PubMed:26505917, PubMed:27268078). Is a ligand for GPR173 (By similarity). As part of the reproductive cycle, it regulates gonadotropin-releasing hormone (GnRH) signaling in the hypothalamus and pituitary gland which augments the release of luteinizing hormone (PubMed:27268078). More specifically, it regulates the expression of transcription factors CEBPB and POU2F1/OCT1 through the cAMP-PKA signaling pathway, which subsequently regulate the expression of GNRHR and KISS1 (PubMed:27268078). Plays a protective role in memory retention through activation of GNRHR (PubMed:26505917). Regulates the secretion of AVP by hypothalamic neurons (By similarity). Plays a role in the transduction of the itch sensation (PubMed:26415767). Induces anxiolytic effects, reducing behavior associated with anxiety (PubMed:25687846). Regulates food intake as well as satiation and satiety by increasing Nucb2 expression in neurons (By similarity). In the ovary, it regulates follicular growth by stimulating granulosa cell proliferation by increasing the expression of GPR173, CREB1, CYP19A1, KITLG, FSHR, and LHCGR (PubMed:30933929). It also increases the production of estradiol (E2) (PubMed:30933929). In the heart, it regulates contractility and relaxation by activating the AKT1-NOS3 and MAPK1-MAPK3 signaling pathways (By similarity). It also plays a cardioprotective role during ischemia, where it activates the SAFE and RISK pathways (By similarity). Stimulates the proliferation and differentiation of preadipocytes (PubMed:30251651). In pancreatic islet cells, it induces proliferation of islet cells as well as the production of INS through activation of the MAPK1-MAPK3 signaling pathways (PubMed:31422055).</text>
</comment>
<comment type="function">
    <molecule>Phoenixin-20</molecule>
    <text evidence="1 5 6 7 8 9 11 12">Peptide involved in a broad spectrum of regulatory functions (PubMed:25687846, PubMed:26505917, PubMed:27268078). Is a ligand for GPR173 (By similarity). As part of the reproductive cycle, it regulates gonadotropin-releasing hormone (GnRH) signaling in the hypothalamus and pituitary gland which augments the release of luteinizing hormone (PubMed:27268078). More specifically, it regulates the expression of transcription factors CEBPB and POU2F1/OCT1 through the cAMP-PKA signaling pathway, which subsequently regulate the expression of GNRHR and KISS1 (PubMed:27268078). Plays a protective role in memory retention through activation of GNRHR (PubMed:26505917). Regulates the secretion of AVP by hypothalamic neurons (By similarity). Plays a role in the transduction of the itch sensation (PubMed:26415767). Induces anxiolytic effects, reducing behavior associated with anxiety (PubMed:25687846). Regulates food intake as well as satiation and satiety by increasing Nucb2 expression in neurons (By similarity). In the ovary, it regulates follicular growth by stimulating granulosa cell proliferation by increasing the expression of GPR173, CREB1, CYP19A1, KITLG, FSHR, and LHCGR (PubMed:30933929). It also increases the production of estradiol (E2) (PubMed:30933929). In the heart, it regulates contractility and relaxation by activating the AKT1-NOS3 and MAPK1-MAPK3 signaling pathways (By similarity). It also plays a cardioprotective role during ischemia, where it activates the SAFE and RISK pathways (By similarity). Stimulates the proliferation and differentiation of preadipocytes (PubMed:30251651). In pancreatic islet cells, it induces proliferation of islet cells as well as the production of INS through activation of the MAPK1-MAPK3 signaling pathways (PubMed:31422055).</text>
</comment>
<comment type="subunit">
    <text evidence="2">Component of the MITRAC (mitochondrial translation regulation assembly intermediate of cytochrome c oxidase complex) complex, the core components of this complex being COA3/MITRAC12 and COX14 (By similarity). Interacts with COA3/MITRAC12 and COX4I1 (By similarity). Directly interacts with newly synthesized MT-CO1/COX1 (By similarity).</text>
</comment>
<comment type="subcellular location">
    <molecule>Small integral membrane protein 20</molecule>
    <subcellularLocation>
        <location evidence="2">Mitochondrion inner membrane</location>
        <topology evidence="13">Single-pass membrane protein</topology>
    </subcellularLocation>
</comment>
<comment type="subcellular location">
    <molecule>Phoenixin-14</molecule>
    <subcellularLocation>
        <location evidence="9">Secreted</location>
    </subcellularLocation>
</comment>
<comment type="subcellular location">
    <molecule>Phoenixin-20</molecule>
    <subcellularLocation>
        <location evidence="9">Secreted</location>
    </subcellularLocation>
</comment>
<comment type="tissue specificity">
    <text evidence="4 6 9 11">Highly expressed in the hypothalamus, the spinal cord, and sensory ganglia (at protein level) (PubMed:23912037, PubMed:26415767). Also expressed on in the epidermis and dermis layers of the skin (at protein level) (PubMed:26415767). Expressed in preadipocytes and adipocytes (at protein level) (PubMed:30251651). Expressed in the ovary, specifically in granulosa cells of follicles that have passed the primary stage and in oocytes (at protein level) (PubMed:30933929).</text>
</comment>
<comment type="induction">
    <text evidence="10">By fatty acids, specifically palmitate, docosahexanoic acid and oleate.</text>
</comment>
<sequence length="69" mass="7818">MAAARNLRTALIFGGFISMVGAAFYPIYFRPLMRLEEYQKEQAVNRAGIVQEDVQPPGLKVWSDPFGRK</sequence>
<keyword id="KW-0027">Amidation</keyword>
<keyword id="KW-0472">Membrane</keyword>
<keyword id="KW-0496">Mitochondrion</keyword>
<keyword id="KW-0999">Mitochondrion inner membrane</keyword>
<keyword id="KW-1185">Reference proteome</keyword>
<keyword id="KW-0964">Secreted</keyword>
<keyword id="KW-0812">Transmembrane</keyword>
<keyword id="KW-1133">Transmembrane helix</keyword>
<protein>
    <recommendedName>
        <fullName>Small integral membrane protein 20</fullName>
    </recommendedName>
    <alternativeName>
        <fullName evidence="2">Mitochondrial translation regulation assembly intermediate of cytochrome c oxidase protein of 7 kDa</fullName>
        <shortName evidence="2">MITRAC7</shortName>
    </alternativeName>
    <component>
        <recommendedName>
            <fullName evidence="1">Phoenixin-14</fullName>
            <shortName evidence="1">PNX-14</shortName>
        </recommendedName>
    </component>
    <component>
        <recommendedName>
            <fullName evidence="1">Phoenixin-20</fullName>
            <shortName evidence="1">PNX-20</shortName>
        </recommendedName>
    </component>
</protein>
<reference evidence="15" key="1">
    <citation type="journal article" date="2009" name="PLoS Biol.">
        <title>Lineage-specific biology revealed by a finished genome assembly of the mouse.</title>
        <authorList>
            <person name="Church D.M."/>
            <person name="Goodstadt L."/>
            <person name="Hillier L.W."/>
            <person name="Zody M.C."/>
            <person name="Goldstein S."/>
            <person name="She X."/>
            <person name="Bult C.J."/>
            <person name="Agarwala R."/>
            <person name="Cherry J.L."/>
            <person name="DiCuccio M."/>
            <person name="Hlavina W."/>
            <person name="Kapustin Y."/>
            <person name="Meric P."/>
            <person name="Maglott D."/>
            <person name="Birtle Z."/>
            <person name="Marques A.C."/>
            <person name="Graves T."/>
            <person name="Zhou S."/>
            <person name="Teague B."/>
            <person name="Potamousis K."/>
            <person name="Churas C."/>
            <person name="Place M."/>
            <person name="Herschleb J."/>
            <person name="Runnheim R."/>
            <person name="Forrest D."/>
            <person name="Amos-Landgraf J."/>
            <person name="Schwartz D.C."/>
            <person name="Cheng Z."/>
            <person name="Lindblad-Toh K."/>
            <person name="Eichler E.E."/>
            <person name="Ponting C.P."/>
        </authorList>
    </citation>
    <scope>NUCLEOTIDE SEQUENCE [LARGE SCALE GENOMIC DNA]</scope>
    <source>
        <strain evidence="15">C57BL/6J</strain>
    </source>
</reference>
<reference evidence="16" key="2">
    <citation type="journal article" date="2010" name="Cell">
        <title>A tissue-specific atlas of mouse protein phosphorylation and expression.</title>
        <authorList>
            <person name="Huttlin E.L."/>
            <person name="Jedrychowski M.P."/>
            <person name="Elias J.E."/>
            <person name="Goswami T."/>
            <person name="Rad R."/>
            <person name="Beausoleil S.A."/>
            <person name="Villen J."/>
            <person name="Haas W."/>
            <person name="Sowa M.E."/>
            <person name="Gygi S.P."/>
        </authorList>
    </citation>
    <scope>IDENTIFICATION BY MASS SPECTROMETRY [LARGE SCALE ANALYSIS]</scope>
</reference>
<reference evidence="13" key="3">
    <citation type="journal article" date="2013" name="Neuroscience">
        <title>Phoenixin: a novel peptide in rodent sensory ganglia.</title>
        <authorList>
            <person name="Lyu R.M."/>
            <person name="Huang X.F."/>
            <person name="Zhang Y."/>
            <person name="Dun S.L."/>
            <person name="Luo J.J."/>
            <person name="Chang J.K."/>
            <person name="Dun N.J."/>
        </authorList>
    </citation>
    <scope>TISSUE SPECIFICITY</scope>
</reference>
<reference evidence="13" key="4">
    <citation type="journal article" date="2015" name="Behav. Brain Res.">
        <title>Effects of Phoenixin-14 on anxiolytic-like behavior in mice.</title>
        <authorList>
            <person name="Jiang J.H."/>
            <person name="He Z."/>
            <person name="Peng Y.L."/>
            <person name="Jin W.D."/>
            <person name="Mu J."/>
            <person name="Xue H.X."/>
            <person name="Wang Z."/>
            <person name="Chang M."/>
            <person name="Wang R."/>
        </authorList>
    </citation>
    <scope>FUNCTION</scope>
</reference>
<reference evidence="13" key="5">
    <citation type="journal article" date="2015" name="Brain Res.">
        <title>Phoenixin-14 enhances memory and mitigates memory impairment induced by Abeta1-42 and scopolamine in mice.</title>
        <authorList>
            <person name="Jiang J.H."/>
            <person name="He Z."/>
            <person name="Peng Y.L."/>
            <person name="Jin W.D."/>
            <person name="Wang Z."/>
            <person name="Mu L.Y."/>
            <person name="Chang M."/>
            <person name="Wang R."/>
        </authorList>
    </citation>
    <scope>FUNCTION</scope>
</reference>
<reference evidence="13" key="6">
    <citation type="journal article" date="2015" name="Neuroscience">
        <title>Phoenixin: A candidate pruritogen in the mouse.</title>
        <authorList>
            <person name="Cowan A."/>
            <person name="Lyu R.M."/>
            <person name="Chen Y.H."/>
            <person name="Dun S.L."/>
            <person name="Chang J.K."/>
            <person name="Dun N.J."/>
        </authorList>
    </citation>
    <scope>IDENTIFICATION BY MASS SPECTROMETRY</scope>
    <scope>FUNCTION</scope>
    <scope>TISSUE SPECIFICITY</scope>
</reference>
<reference evidence="13" key="7">
    <citation type="journal article" date="2016" name="Mol. Endocrinol.">
        <title>Phoenixin Activates Immortalized GnRH and Kisspeptin Neurons Through the Novel Receptor GPR173.</title>
        <authorList>
            <person name="Treen A.K."/>
            <person name="Luo V."/>
            <person name="Belsham D.D."/>
        </authorList>
    </citation>
    <scope>FUNCTION</scope>
</reference>
<reference evidence="13" key="8">
    <citation type="journal article" date="2018" name="Biochim. Biophys. Acta">
        <title>Phoenixin-14 stimulates differentiation of 3T3-L1 preadipocytes via cAMP/Epac-dependent mechanism.</title>
        <authorList>
            <person name="Billert M."/>
            <person name="Wojciechowicz T."/>
            <person name="Jasaszwili M."/>
            <person name="Szczepankiewicz D."/>
            <person name="Wasko J."/>
            <person name="Kazmierczak S."/>
            <person name="Strowski M.Z."/>
            <person name="Nowak K.W."/>
            <person name="Skrzypski M."/>
        </authorList>
    </citation>
    <scope>SUBCELLULAR LOCATION</scope>
    <scope>TISSUE SPECIFICITY</scope>
</reference>
<reference evidence="13" key="9">
    <citation type="journal article" date="2018" name="Front. Neurosci.">
        <title>Phoenixin Expression Is Regulated by the Fatty Acids Palmitate, Docosahexaenoic Acid and Oleate, and the Endocrine Disrupting Chemical Bisphenol A in Immortalized Hypothalamic Neurons.</title>
        <authorList>
            <person name="McIlwraith E.K."/>
            <person name="Loganathan N."/>
            <person name="Belsham D.D."/>
        </authorList>
    </citation>
    <scope>INDUCTION</scope>
</reference>
<reference evidence="13" key="10">
    <citation type="journal article" date="2019" name="Biochim. Biophys. Acta">
        <title>Phoenixin-14 stimulates proliferation and insulin secretion in insulin producing INS-1E cells.</title>
        <authorList>
            <person name="Billert M."/>
            <person name="Kolodziejski P.A."/>
            <person name="Strowski M.Z."/>
            <person name="Nowak K.W."/>
            <person name="Skrzypski M."/>
        </authorList>
    </citation>
    <scope>FUNCTION</scope>
</reference>
<reference evidence="13" key="11">
    <citation type="journal article" date="2019" name="Reproduction">
        <title>Effect of the Neuropeptide Phoenixin and Its Receptor GPR173 During Folliculogenesis.</title>
        <authorList>
            <person name="Nguyen X.P."/>
            <person name="Nakamura T."/>
            <person name="Osuka S."/>
            <person name="Bayasula B."/>
            <person name="Nakanishi N."/>
            <person name="Kasahara Y."/>
            <person name="Muraoka A."/>
            <person name="Hayashi S."/>
            <person name="Nagai T."/>
            <person name="Murase T."/>
            <person name="Goto M."/>
            <person name="Iwase A."/>
            <person name="Kikkawa F."/>
        </authorList>
    </citation>
    <scope>FUNCTION</scope>
    <scope>TISSUE SPECIFICITY</scope>
</reference>